<organism>
    <name type="scientific">Xylella fastidiosa (strain M12)</name>
    <dbReference type="NCBI Taxonomy" id="405440"/>
    <lineage>
        <taxon>Bacteria</taxon>
        <taxon>Pseudomonadati</taxon>
        <taxon>Pseudomonadota</taxon>
        <taxon>Gammaproteobacteria</taxon>
        <taxon>Lysobacterales</taxon>
        <taxon>Lysobacteraceae</taxon>
        <taxon>Xylella</taxon>
    </lineage>
</organism>
<sequence length="435" mass="47625">MRVLILGSGVIGTTSAWYLSKAGCEVVVVDRQSGAGLETSYANGGQLSFGYTSPWAAPGVPLKAVRWLFERHAPLSIRPTTDWNQYVWLARMLRHCSAERYAVNKSRMLRLSEYSREALEALSAETGITFEGRRLGTIQLFRTQQQLDAAVRDIELLTQYGIPYEVLSPHQLAKFEPGLVDGSVRFAGALRLPHDQTGDCYLFTQRLAALAAKRGVEFRYGCKVQRLEVDGPRVTGAWINGALERADCCVVALGSYSPLLLAPLGLRLPVYPLKGFSLTLPMIDASRAPVSTVLDESYKVAVTRFDERIRVAGMAEVSGYDVSLNPRRRATLEMVVQDVYPGCGDLGRGEFWTGLRPATPDGTPVIGATPYQGLFLNTGHGTLGWTMSSGSGRYLADLICCRPCEISSEGLDMFRYLVSTIPCPQECAPCVPPTP</sequence>
<evidence type="ECO:0000255" key="1">
    <source>
        <dbReference type="HAMAP-Rule" id="MF_01202"/>
    </source>
</evidence>
<proteinExistence type="inferred from homology"/>
<dbReference type="EC" id="1.4.99.-" evidence="1"/>
<dbReference type="EMBL" id="CP000941">
    <property type="protein sequence ID" value="ACA12870.1"/>
    <property type="molecule type" value="Genomic_DNA"/>
</dbReference>
<dbReference type="RefSeq" id="WP_012338080.1">
    <property type="nucleotide sequence ID" value="NC_010513.1"/>
</dbReference>
<dbReference type="SMR" id="B0U4V3"/>
<dbReference type="KEGG" id="xfm:Xfasm12_2000"/>
<dbReference type="HOGENOM" id="CLU_007884_9_2_6"/>
<dbReference type="UniPathway" id="UPA00043">
    <property type="reaction ID" value="UER00498"/>
</dbReference>
<dbReference type="GO" id="GO:0005737">
    <property type="term" value="C:cytoplasm"/>
    <property type="evidence" value="ECO:0007669"/>
    <property type="project" value="TreeGrafter"/>
</dbReference>
<dbReference type="GO" id="GO:0005886">
    <property type="term" value="C:plasma membrane"/>
    <property type="evidence" value="ECO:0007669"/>
    <property type="project" value="TreeGrafter"/>
</dbReference>
<dbReference type="GO" id="GO:0008718">
    <property type="term" value="F:D-amino-acid dehydrogenase activity"/>
    <property type="evidence" value="ECO:0007669"/>
    <property type="project" value="UniProtKB-UniRule"/>
</dbReference>
<dbReference type="GO" id="GO:0055130">
    <property type="term" value="P:D-alanine catabolic process"/>
    <property type="evidence" value="ECO:0007669"/>
    <property type="project" value="UniProtKB-UniPathway"/>
</dbReference>
<dbReference type="FunFam" id="3.50.50.60:FF:000020">
    <property type="entry name" value="D-amino acid dehydrogenase"/>
    <property type="match status" value="1"/>
</dbReference>
<dbReference type="Gene3D" id="3.30.9.10">
    <property type="entry name" value="D-Amino Acid Oxidase, subunit A, domain 2"/>
    <property type="match status" value="1"/>
</dbReference>
<dbReference type="Gene3D" id="3.50.50.60">
    <property type="entry name" value="FAD/NAD(P)-binding domain"/>
    <property type="match status" value="2"/>
</dbReference>
<dbReference type="HAMAP" id="MF_01202">
    <property type="entry name" value="DadA"/>
    <property type="match status" value="1"/>
</dbReference>
<dbReference type="InterPro" id="IPR023080">
    <property type="entry name" value="DadA"/>
</dbReference>
<dbReference type="InterPro" id="IPR006076">
    <property type="entry name" value="FAD-dep_OxRdtase"/>
</dbReference>
<dbReference type="InterPro" id="IPR036188">
    <property type="entry name" value="FAD/NAD-bd_sf"/>
</dbReference>
<dbReference type="NCBIfam" id="NF001933">
    <property type="entry name" value="PRK00711.1"/>
    <property type="match status" value="1"/>
</dbReference>
<dbReference type="PANTHER" id="PTHR13847:SF280">
    <property type="entry name" value="D-AMINO ACID DEHYDROGENASE"/>
    <property type="match status" value="1"/>
</dbReference>
<dbReference type="PANTHER" id="PTHR13847">
    <property type="entry name" value="SARCOSINE DEHYDROGENASE-RELATED"/>
    <property type="match status" value="1"/>
</dbReference>
<dbReference type="Pfam" id="PF01266">
    <property type="entry name" value="DAO"/>
    <property type="match status" value="1"/>
</dbReference>
<dbReference type="SUPFAM" id="SSF54373">
    <property type="entry name" value="FAD-linked reductases, C-terminal domain"/>
    <property type="match status" value="1"/>
</dbReference>
<dbReference type="SUPFAM" id="SSF51905">
    <property type="entry name" value="FAD/NAD(P)-binding domain"/>
    <property type="match status" value="1"/>
</dbReference>
<accession>B0U4V3</accession>
<protein>
    <recommendedName>
        <fullName evidence="1">D-amino acid dehydrogenase</fullName>
        <ecNumber evidence="1">1.4.99.-</ecNumber>
    </recommendedName>
</protein>
<comment type="function">
    <text evidence="1">Oxidative deamination of D-amino acids.</text>
</comment>
<comment type="catalytic activity">
    <reaction evidence="1">
        <text>a D-alpha-amino acid + A + H2O = a 2-oxocarboxylate + AH2 + NH4(+)</text>
        <dbReference type="Rhea" id="RHEA:18125"/>
        <dbReference type="ChEBI" id="CHEBI:13193"/>
        <dbReference type="ChEBI" id="CHEBI:15377"/>
        <dbReference type="ChEBI" id="CHEBI:17499"/>
        <dbReference type="ChEBI" id="CHEBI:28938"/>
        <dbReference type="ChEBI" id="CHEBI:35179"/>
        <dbReference type="ChEBI" id="CHEBI:59871"/>
    </reaction>
</comment>
<comment type="cofactor">
    <cofactor evidence="1">
        <name>FAD</name>
        <dbReference type="ChEBI" id="CHEBI:57692"/>
    </cofactor>
</comment>
<comment type="pathway">
    <text>Amino-acid degradation; D-alanine degradation; NH(3) and pyruvate from D-alanine: step 1/1.</text>
</comment>
<comment type="similarity">
    <text evidence="1">Belongs to the DadA oxidoreductase family.</text>
</comment>
<reference key="1">
    <citation type="journal article" date="2010" name="J. Bacteriol.">
        <title>Whole genome sequences of two Xylella fastidiosa strains (M12 and M23) causing almond leaf scorch disease in California.</title>
        <authorList>
            <person name="Chen J."/>
            <person name="Xie G."/>
            <person name="Han S."/>
            <person name="Chertkov O."/>
            <person name="Sims D."/>
            <person name="Civerolo E.L."/>
        </authorList>
    </citation>
    <scope>NUCLEOTIDE SEQUENCE [LARGE SCALE GENOMIC DNA]</scope>
    <source>
        <strain>M12</strain>
    </source>
</reference>
<gene>
    <name evidence="1" type="primary">dadA</name>
    <name type="ordered locus">Xfasm12_2000</name>
</gene>
<feature type="chain" id="PRO_1000138676" description="D-amino acid dehydrogenase">
    <location>
        <begin position="1"/>
        <end position="435"/>
    </location>
</feature>
<feature type="binding site" evidence="1">
    <location>
        <begin position="3"/>
        <end position="17"/>
    </location>
    <ligand>
        <name>FAD</name>
        <dbReference type="ChEBI" id="CHEBI:57692"/>
    </ligand>
</feature>
<name>DADA_XYLFM</name>
<keyword id="KW-0274">FAD</keyword>
<keyword id="KW-0285">Flavoprotein</keyword>
<keyword id="KW-0560">Oxidoreductase</keyword>